<evidence type="ECO:0000250" key="1"/>
<evidence type="ECO:0000269" key="2">
    <source>
    </source>
</evidence>
<evidence type="ECO:0000305" key="3"/>
<evidence type="ECO:0007829" key="4">
    <source>
        <dbReference type="PDB" id="2UYK"/>
    </source>
</evidence>
<evidence type="ECO:0007829" key="5">
    <source>
        <dbReference type="PDB" id="2UYN"/>
    </source>
</evidence>
<evidence type="ECO:0007829" key="6">
    <source>
        <dbReference type="PDB" id="2UYP"/>
    </source>
</evidence>
<name>TDCF_ECOLI</name>
<reference key="1">
    <citation type="journal article" date="1997" name="Science">
        <title>The complete genome sequence of Escherichia coli K-12.</title>
        <authorList>
            <person name="Blattner F.R."/>
            <person name="Plunkett G. III"/>
            <person name="Bloch C.A."/>
            <person name="Perna N.T."/>
            <person name="Burland V."/>
            <person name="Riley M."/>
            <person name="Collado-Vides J."/>
            <person name="Glasner J.D."/>
            <person name="Rode C.K."/>
            <person name="Mayhew G.F."/>
            <person name="Gregor J."/>
            <person name="Davis N.W."/>
            <person name="Kirkpatrick H.A."/>
            <person name="Goeden M.A."/>
            <person name="Rose D.J."/>
            <person name="Mau B."/>
            <person name="Shao Y."/>
        </authorList>
    </citation>
    <scope>NUCLEOTIDE SEQUENCE [LARGE SCALE GENOMIC DNA]</scope>
    <source>
        <strain>K12 / MG1655 / ATCC 47076</strain>
    </source>
</reference>
<reference key="2">
    <citation type="journal article" date="2006" name="Mol. Syst. Biol.">
        <title>Highly accurate genome sequences of Escherichia coli K-12 strains MG1655 and W3110.</title>
        <authorList>
            <person name="Hayashi K."/>
            <person name="Morooka N."/>
            <person name="Yamamoto Y."/>
            <person name="Fujita K."/>
            <person name="Isono K."/>
            <person name="Choi S."/>
            <person name="Ohtsubo E."/>
            <person name="Baba T."/>
            <person name="Wanner B.L."/>
            <person name="Mori H."/>
            <person name="Horiuchi T."/>
        </authorList>
    </citation>
    <scope>NUCLEOTIDE SEQUENCE [LARGE SCALE GENOMIC DNA]</scope>
    <source>
        <strain>K12 / W3110 / ATCC 27325 / DSM 5911</strain>
    </source>
</reference>
<reference key="3">
    <citation type="journal article" date="1998" name="Mol. Microbiol.">
        <title>Novel keto acid formate-lyase and propionate kinase enzymes are components of an anaerobic pathway in Escherichia coli that degrades L-threonine to propionate.</title>
        <authorList>
            <person name="Hesslinger C."/>
            <person name="Fairhurst S.A."/>
            <person name="Sawers G."/>
        </authorList>
    </citation>
    <scope>GENE NAME</scope>
</reference>
<reference key="4">
    <citation type="journal article" date="2007" name="BMC Struct. Biol.">
        <title>The crystal structure of Escherichia coli TdcF, a member of the highly conserved YjgF/YER057c/UK114 family.</title>
        <authorList>
            <person name="Burman J.D."/>
            <person name="Stevenson C.E."/>
            <person name="Sawers R.G."/>
            <person name="Lawson D.M."/>
        </authorList>
    </citation>
    <scope>X-RAY CRYSTALLOGRAPHY (2.35 ANGSTROMS) IN COMPLEX WITH SUBSTRATE ANALOGS</scope>
    <scope>SUBUNIT</scope>
</reference>
<protein>
    <recommendedName>
        <fullName>Putative reactive intermediate deaminase TdcF</fullName>
        <ecNumber>3.5.4.-</ecNumber>
    </recommendedName>
</protein>
<comment type="function">
    <text>May be a post-translational regulator that controls the metabolic fate of L-threonine or the potentially toxic intermediate 2-ketobutyrate.</text>
</comment>
<comment type="pathway">
    <text>Amino-acid degradation; L-threonine degradation via propanoate pathway.</text>
</comment>
<comment type="subunit">
    <text evidence="2">Homotrimer.</text>
</comment>
<comment type="similarity">
    <text evidence="3">Belongs to the RutC family.</text>
</comment>
<comment type="sequence caution" evidence="3">
    <conflict type="erroneous initiation">
        <sequence resource="EMBL-CDS" id="AAA57917"/>
    </conflict>
    <text>Extended N-terminus.</text>
</comment>
<gene>
    <name type="primary">tdcF</name>
    <name type="synonym">yhaR</name>
    <name type="ordered locus">b3113</name>
    <name type="ordered locus">JW5521</name>
</gene>
<dbReference type="EC" id="3.5.4.-"/>
<dbReference type="EMBL" id="U18997">
    <property type="protein sequence ID" value="AAA57917.1"/>
    <property type="status" value="ALT_INIT"/>
    <property type="molecule type" value="Genomic_DNA"/>
</dbReference>
<dbReference type="EMBL" id="U00096">
    <property type="protein sequence ID" value="AAC76148.2"/>
    <property type="molecule type" value="Genomic_DNA"/>
</dbReference>
<dbReference type="EMBL" id="AP009048">
    <property type="protein sequence ID" value="BAE77161.1"/>
    <property type="molecule type" value="Genomic_DNA"/>
</dbReference>
<dbReference type="PIR" id="F65100">
    <property type="entry name" value="F65100"/>
</dbReference>
<dbReference type="RefSeq" id="NP_417583.4">
    <property type="nucleotide sequence ID" value="NC_000913.3"/>
</dbReference>
<dbReference type="RefSeq" id="WP_000719990.1">
    <property type="nucleotide sequence ID" value="NZ_SSZK01000007.1"/>
</dbReference>
<dbReference type="PDB" id="2UYJ">
    <property type="method" value="X-ray"/>
    <property type="resolution" value="2.35 A"/>
    <property type="chains" value="A/B/C=1-129"/>
</dbReference>
<dbReference type="PDB" id="2UYK">
    <property type="method" value="X-ray"/>
    <property type="resolution" value="1.60 A"/>
    <property type="chains" value="A/B/C=1-129"/>
</dbReference>
<dbReference type="PDB" id="2UYN">
    <property type="method" value="X-ray"/>
    <property type="resolution" value="1.60 A"/>
    <property type="chains" value="A/B/C=1-129"/>
</dbReference>
<dbReference type="PDB" id="2UYP">
    <property type="method" value="X-ray"/>
    <property type="resolution" value="2.44 A"/>
    <property type="chains" value="A/B/C=1-129"/>
</dbReference>
<dbReference type="PDBsum" id="2UYJ"/>
<dbReference type="PDBsum" id="2UYK"/>
<dbReference type="PDBsum" id="2UYN"/>
<dbReference type="PDBsum" id="2UYP"/>
<dbReference type="SMR" id="P0AGL2"/>
<dbReference type="BioGRID" id="4259264">
    <property type="interactions" value="26"/>
</dbReference>
<dbReference type="DIP" id="DIP-48213N"/>
<dbReference type="FunCoup" id="P0AGL2">
    <property type="interactions" value="704"/>
</dbReference>
<dbReference type="STRING" id="511145.b3113"/>
<dbReference type="ChEMBL" id="CHEMBL3309027"/>
<dbReference type="jPOST" id="P0AGL2"/>
<dbReference type="PaxDb" id="511145-b3113"/>
<dbReference type="EnsemblBacteria" id="AAC76148">
    <property type="protein sequence ID" value="AAC76148"/>
    <property type="gene ID" value="b3113"/>
</dbReference>
<dbReference type="GeneID" id="947624"/>
<dbReference type="KEGG" id="ecj:JW5521"/>
<dbReference type="KEGG" id="eco:b3113"/>
<dbReference type="KEGG" id="ecoc:C3026_16980"/>
<dbReference type="PATRIC" id="fig|511145.12.peg.3207"/>
<dbReference type="EchoBASE" id="EB2611"/>
<dbReference type="eggNOG" id="COG0251">
    <property type="taxonomic scope" value="Bacteria"/>
</dbReference>
<dbReference type="HOGENOM" id="CLU_100715_7_1_6"/>
<dbReference type="InParanoid" id="P0AGL2"/>
<dbReference type="OMA" id="ECTAYLN"/>
<dbReference type="OrthoDB" id="9803101at2"/>
<dbReference type="PhylomeDB" id="P0AGL2"/>
<dbReference type="BioCyc" id="EcoCyc:G7626-MONOMER"/>
<dbReference type="UniPathway" id="UPA00052"/>
<dbReference type="EvolutionaryTrace" id="P0AGL2"/>
<dbReference type="PRO" id="PR:P0AGL2"/>
<dbReference type="Proteomes" id="UP000000625">
    <property type="component" value="Chromosome"/>
</dbReference>
<dbReference type="GO" id="GO:0005829">
    <property type="term" value="C:cytosol"/>
    <property type="evidence" value="ECO:0000318"/>
    <property type="project" value="GO_Central"/>
</dbReference>
<dbReference type="GO" id="GO:0019239">
    <property type="term" value="F:deaminase activity"/>
    <property type="evidence" value="ECO:0000318"/>
    <property type="project" value="GO_Central"/>
</dbReference>
<dbReference type="GO" id="GO:0042802">
    <property type="term" value="F:identical protein binding"/>
    <property type="evidence" value="ECO:0000314"/>
    <property type="project" value="EcoCyc"/>
</dbReference>
<dbReference type="GO" id="GO:0070689">
    <property type="term" value="P:L-threonine catabolic process to propionate"/>
    <property type="evidence" value="ECO:0007669"/>
    <property type="project" value="UniProtKB-UniPathway"/>
</dbReference>
<dbReference type="GO" id="GO:0006566">
    <property type="term" value="P:threonine metabolic process"/>
    <property type="evidence" value="ECO:0000314"/>
    <property type="project" value="UniProtKB"/>
</dbReference>
<dbReference type="CDD" id="cd00448">
    <property type="entry name" value="YjgF_YER057c_UK114_family"/>
    <property type="match status" value="1"/>
</dbReference>
<dbReference type="FunFam" id="3.30.1330.40:FF:000001">
    <property type="entry name" value="L-PSP family endoribonuclease"/>
    <property type="match status" value="1"/>
</dbReference>
<dbReference type="Gene3D" id="3.30.1330.40">
    <property type="entry name" value="RutC-like"/>
    <property type="match status" value="1"/>
</dbReference>
<dbReference type="InterPro" id="IPR006056">
    <property type="entry name" value="RidA"/>
</dbReference>
<dbReference type="InterPro" id="IPR019897">
    <property type="entry name" value="RidA_CS"/>
</dbReference>
<dbReference type="InterPro" id="IPR035959">
    <property type="entry name" value="RutC-like_sf"/>
</dbReference>
<dbReference type="InterPro" id="IPR006175">
    <property type="entry name" value="YjgF/YER057c/UK114"/>
</dbReference>
<dbReference type="NCBIfam" id="NF008490">
    <property type="entry name" value="PRK11401.1"/>
    <property type="match status" value="1"/>
</dbReference>
<dbReference type="NCBIfam" id="TIGR00004">
    <property type="entry name" value="Rid family detoxifying hydrolase"/>
    <property type="match status" value="1"/>
</dbReference>
<dbReference type="PANTHER" id="PTHR11803">
    <property type="entry name" value="2-IMINOBUTANOATE/2-IMINOPROPANOATE DEAMINASE RIDA"/>
    <property type="match status" value="1"/>
</dbReference>
<dbReference type="PANTHER" id="PTHR11803:SF39">
    <property type="entry name" value="2-IMINOBUTANOATE_2-IMINOPROPANOATE DEAMINASE"/>
    <property type="match status" value="1"/>
</dbReference>
<dbReference type="Pfam" id="PF01042">
    <property type="entry name" value="Ribonuc_L-PSP"/>
    <property type="match status" value="1"/>
</dbReference>
<dbReference type="SUPFAM" id="SSF55298">
    <property type="entry name" value="YjgF-like"/>
    <property type="match status" value="1"/>
</dbReference>
<dbReference type="PROSITE" id="PS01094">
    <property type="entry name" value="UPF0076"/>
    <property type="match status" value="1"/>
</dbReference>
<organism>
    <name type="scientific">Escherichia coli (strain K12)</name>
    <dbReference type="NCBI Taxonomy" id="83333"/>
    <lineage>
        <taxon>Bacteria</taxon>
        <taxon>Pseudomonadati</taxon>
        <taxon>Pseudomonadota</taxon>
        <taxon>Gammaproteobacteria</taxon>
        <taxon>Enterobacterales</taxon>
        <taxon>Enterobacteriaceae</taxon>
        <taxon>Escherichia</taxon>
    </lineage>
</organism>
<feature type="chain" id="PRO_0000170316" description="Putative reactive intermediate deaminase TdcF">
    <location>
        <begin position="1"/>
        <end position="129"/>
    </location>
</feature>
<feature type="binding site">
    <location>
        <begin position="105"/>
        <end position="107"/>
    </location>
    <ligand>
        <name>substrate</name>
    </ligand>
</feature>
<feature type="binding site">
    <location>
        <position position="120"/>
    </location>
    <ligand>
        <name>substrate</name>
    </ligand>
</feature>
<feature type="modified residue" description="N6-(pyridoxal phosphate)lysine" evidence="1">
    <location>
        <position position="58"/>
    </location>
</feature>
<feature type="strand" evidence="4">
    <location>
        <begin position="3"/>
        <end position="5"/>
    </location>
</feature>
<feature type="strand" evidence="6">
    <location>
        <begin position="8"/>
        <end position="10"/>
    </location>
</feature>
<feature type="strand" evidence="5">
    <location>
        <begin position="14"/>
        <end position="16"/>
    </location>
</feature>
<feature type="strand" evidence="4">
    <location>
        <begin position="19"/>
        <end position="22"/>
    </location>
</feature>
<feature type="strand" evidence="4">
    <location>
        <begin position="24"/>
        <end position="29"/>
    </location>
</feature>
<feature type="turn" evidence="4">
    <location>
        <begin position="37"/>
        <end position="39"/>
    </location>
</feature>
<feature type="helix" evidence="4">
    <location>
        <begin position="46"/>
        <end position="63"/>
    </location>
</feature>
<feature type="helix" evidence="4">
    <location>
        <begin position="68"/>
        <end position="70"/>
    </location>
</feature>
<feature type="strand" evidence="4">
    <location>
        <begin position="71"/>
        <end position="79"/>
    </location>
</feature>
<feature type="helix" evidence="4">
    <location>
        <begin position="81"/>
        <end position="83"/>
    </location>
</feature>
<feature type="helix" evidence="4">
    <location>
        <begin position="84"/>
        <end position="97"/>
    </location>
</feature>
<feature type="strand" evidence="4">
    <location>
        <begin position="104"/>
        <end position="109"/>
    </location>
</feature>
<feature type="helix" evidence="4">
    <location>
        <begin position="114"/>
        <end position="116"/>
    </location>
</feature>
<feature type="strand" evidence="4">
    <location>
        <begin position="118"/>
        <end position="126"/>
    </location>
</feature>
<sequence length="129" mass="14007">MKKIIETQRAPGAIGPYVQGVDLGSMVFTSGQIPVCPQTGEIPADVQDQARLSLENVKAIVVAAGLSVGDIIKMTVFITDLNDFATINEVYKQFFDEHQATYPTRSCVQVARLPKDVKLEIEAIAVRSA</sequence>
<accession>P0AGL2</accession>
<accession>P42631</accession>
<accession>Q2M995</accession>
<keyword id="KW-0002">3D-structure</keyword>
<keyword id="KW-0378">Hydrolase</keyword>
<keyword id="KW-0663">Pyridoxal phosphate</keyword>
<keyword id="KW-1185">Reference proteome</keyword>
<proteinExistence type="evidence at protein level"/>